<evidence type="ECO:0000250" key="1">
    <source>
        <dbReference type="UniProtKB" id="P28240"/>
    </source>
</evidence>
<evidence type="ECO:0000250" key="2">
    <source>
        <dbReference type="UniProtKB" id="P28299"/>
    </source>
</evidence>
<evidence type="ECO:0000250" key="3">
    <source>
        <dbReference type="UniProtKB" id="P9WKK7"/>
    </source>
</evidence>
<evidence type="ECO:0000269" key="4">
    <source>
    </source>
</evidence>
<evidence type="ECO:0000303" key="5">
    <source>
    </source>
</evidence>
<evidence type="ECO:0000305" key="6"/>
<evidence type="ECO:0000305" key="7">
    <source>
    </source>
</evidence>
<evidence type="ECO:0007829" key="8">
    <source>
        <dbReference type="PDB" id="1DQU"/>
    </source>
</evidence>
<comment type="function">
    <text evidence="1">Catalyzes the formation of succinate and glyoxylate from isocitrate, a key step of the glyoxylate cycle, which operates as an anaplerotic route for replenishing the tricarboxylic acid cycle. Required for growth on ethanol or acetate, but dispensable when fermentable carbon sources are available. Also acts on 2-methylisocitrate.</text>
</comment>
<comment type="catalytic activity">
    <reaction evidence="1">
        <text>D-threo-isocitrate = glyoxylate + succinate</text>
        <dbReference type="Rhea" id="RHEA:13245"/>
        <dbReference type="ChEBI" id="CHEBI:15562"/>
        <dbReference type="ChEBI" id="CHEBI:30031"/>
        <dbReference type="ChEBI" id="CHEBI:36655"/>
        <dbReference type="EC" id="4.1.3.1"/>
    </reaction>
</comment>
<comment type="catalytic activity">
    <reaction evidence="1">
        <text>(2S,3R)-3-hydroxybutane-1,2,3-tricarboxylate = pyruvate + succinate</text>
        <dbReference type="Rhea" id="RHEA:16809"/>
        <dbReference type="ChEBI" id="CHEBI:15361"/>
        <dbReference type="ChEBI" id="CHEBI:30031"/>
        <dbReference type="ChEBI" id="CHEBI:57429"/>
        <dbReference type="EC" id="4.1.3.30"/>
    </reaction>
</comment>
<comment type="cofactor">
    <cofactor evidence="3">
        <name>Mg(2+)</name>
        <dbReference type="ChEBI" id="CHEBI:18420"/>
    </cofactor>
</comment>
<comment type="pathway">
    <text>Carbohydrate metabolism; glyoxylate cycle; (S)-malate from isocitrate: step 1/2.</text>
</comment>
<comment type="subunit">
    <text evidence="4">Homotetramer.</text>
</comment>
<comment type="subcellular location">
    <subcellularLocation>
        <location evidence="2">Glyoxysome</location>
    </subcellularLocation>
</comment>
<comment type="similarity">
    <text evidence="6">Belongs to the isocitrate lyase/PEP mutase superfamily. Isocitrate lyase family.</text>
</comment>
<accession>P28298</accession>
<accession>C8VFW4</accession>
<accession>Q5B1E6</accession>
<dbReference type="EC" id="4.1.3.1" evidence="1"/>
<dbReference type="EC" id="4.1.3.30" evidence="1"/>
<dbReference type="EMBL" id="X62696">
    <property type="protein sequence ID" value="CAA44572.1"/>
    <property type="molecule type" value="Genomic_DNA"/>
</dbReference>
<dbReference type="EMBL" id="AACD01000098">
    <property type="protein sequence ID" value="EAA62727.1"/>
    <property type="molecule type" value="Genomic_DNA"/>
</dbReference>
<dbReference type="EMBL" id="BN001305">
    <property type="protein sequence ID" value="CBF81510.1"/>
    <property type="molecule type" value="Genomic_DNA"/>
</dbReference>
<dbReference type="PIR" id="S26857">
    <property type="entry name" value="S26857"/>
</dbReference>
<dbReference type="RefSeq" id="XP_663238.1">
    <property type="nucleotide sequence ID" value="XM_658146.1"/>
</dbReference>
<dbReference type="PDB" id="1DQU">
    <property type="method" value="X-ray"/>
    <property type="resolution" value="2.80 A"/>
    <property type="chains" value="A=1-538"/>
</dbReference>
<dbReference type="PDBsum" id="1DQU"/>
<dbReference type="SMR" id="P28298"/>
<dbReference type="FunCoup" id="P28298">
    <property type="interactions" value="162"/>
</dbReference>
<dbReference type="STRING" id="227321.P28298"/>
<dbReference type="EnsemblFungi" id="CBF81510">
    <property type="protein sequence ID" value="CBF81510"/>
    <property type="gene ID" value="ANIA_05634"/>
</dbReference>
<dbReference type="KEGG" id="ani:ANIA_05634"/>
<dbReference type="VEuPathDB" id="FungiDB:AN5634"/>
<dbReference type="eggNOG" id="KOG1260">
    <property type="taxonomic scope" value="Eukaryota"/>
</dbReference>
<dbReference type="HOGENOM" id="CLU_019214_2_2_1"/>
<dbReference type="InParanoid" id="P28298"/>
<dbReference type="OMA" id="YVSGWQV"/>
<dbReference type="OrthoDB" id="4078635at2759"/>
<dbReference type="UniPathway" id="UPA00703">
    <property type="reaction ID" value="UER00719"/>
</dbReference>
<dbReference type="EvolutionaryTrace" id="P28298"/>
<dbReference type="Proteomes" id="UP000000560">
    <property type="component" value="Chromosome V"/>
</dbReference>
<dbReference type="GO" id="GO:0009514">
    <property type="term" value="C:glyoxysome"/>
    <property type="evidence" value="ECO:0007669"/>
    <property type="project" value="UniProtKB-SubCell"/>
</dbReference>
<dbReference type="GO" id="GO:0005782">
    <property type="term" value="C:peroxisomal matrix"/>
    <property type="evidence" value="ECO:0000314"/>
    <property type="project" value="AspGD"/>
</dbReference>
<dbReference type="GO" id="GO:0005777">
    <property type="term" value="C:peroxisome"/>
    <property type="evidence" value="ECO:0000314"/>
    <property type="project" value="AspGD"/>
</dbReference>
<dbReference type="GO" id="GO:0004451">
    <property type="term" value="F:isocitrate lyase activity"/>
    <property type="evidence" value="ECO:0000266"/>
    <property type="project" value="AspGD"/>
</dbReference>
<dbReference type="GO" id="GO:0046872">
    <property type="term" value="F:metal ion binding"/>
    <property type="evidence" value="ECO:0007669"/>
    <property type="project" value="UniProtKB-KW"/>
</dbReference>
<dbReference type="GO" id="GO:0046421">
    <property type="term" value="F:methylisocitrate lyase activity"/>
    <property type="evidence" value="ECO:0007669"/>
    <property type="project" value="UniProtKB-EC"/>
</dbReference>
<dbReference type="GO" id="GO:0045733">
    <property type="term" value="P:acetate catabolic process"/>
    <property type="evidence" value="ECO:0000315"/>
    <property type="project" value="AspGD"/>
</dbReference>
<dbReference type="GO" id="GO:0015976">
    <property type="term" value="P:carbon utilization"/>
    <property type="evidence" value="ECO:0000315"/>
    <property type="project" value="AspGD"/>
</dbReference>
<dbReference type="GO" id="GO:0009062">
    <property type="term" value="P:fatty acid catabolic process"/>
    <property type="evidence" value="ECO:0000315"/>
    <property type="project" value="AspGD"/>
</dbReference>
<dbReference type="GO" id="GO:0006097">
    <property type="term" value="P:glyoxylate cycle"/>
    <property type="evidence" value="ECO:0007669"/>
    <property type="project" value="UniProtKB-UniPathway"/>
</dbReference>
<dbReference type="GO" id="GO:0006099">
    <property type="term" value="P:tricarboxylic acid cycle"/>
    <property type="evidence" value="ECO:0007669"/>
    <property type="project" value="UniProtKB-KW"/>
</dbReference>
<dbReference type="FunFam" id="1.10.10.850:FF:000001">
    <property type="entry name" value="Isocitrate lyase"/>
    <property type="match status" value="1"/>
</dbReference>
<dbReference type="Gene3D" id="1.10.10.850">
    <property type="match status" value="1"/>
</dbReference>
<dbReference type="Gene3D" id="3.20.20.60">
    <property type="entry name" value="Phosphoenolpyruvate-binding domains"/>
    <property type="match status" value="1"/>
</dbReference>
<dbReference type="InterPro" id="IPR006254">
    <property type="entry name" value="Isocitrate_lyase"/>
</dbReference>
<dbReference type="InterPro" id="IPR018523">
    <property type="entry name" value="Isocitrate_lyase_ph_CS"/>
</dbReference>
<dbReference type="InterPro" id="IPR015813">
    <property type="entry name" value="Pyrv/PenolPyrv_kinase-like_dom"/>
</dbReference>
<dbReference type="InterPro" id="IPR040442">
    <property type="entry name" value="Pyrv_kinase-like_dom_sf"/>
</dbReference>
<dbReference type="NCBIfam" id="TIGR01346">
    <property type="entry name" value="isocit_lyase"/>
    <property type="match status" value="1"/>
</dbReference>
<dbReference type="PANTHER" id="PTHR21631:SF3">
    <property type="entry name" value="BIFUNCTIONAL GLYOXYLATE CYCLE PROTEIN"/>
    <property type="match status" value="1"/>
</dbReference>
<dbReference type="PANTHER" id="PTHR21631">
    <property type="entry name" value="ISOCITRATE LYASE/MALATE SYNTHASE"/>
    <property type="match status" value="1"/>
</dbReference>
<dbReference type="Pfam" id="PF00463">
    <property type="entry name" value="ICL"/>
    <property type="match status" value="1"/>
</dbReference>
<dbReference type="PIRSF" id="PIRSF001362">
    <property type="entry name" value="Isocit_lyase"/>
    <property type="match status" value="1"/>
</dbReference>
<dbReference type="SUPFAM" id="SSF51621">
    <property type="entry name" value="Phosphoenolpyruvate/pyruvate domain"/>
    <property type="match status" value="1"/>
</dbReference>
<dbReference type="PROSITE" id="PS00161">
    <property type="entry name" value="ISOCITRATE_LYASE"/>
    <property type="match status" value="1"/>
</dbReference>
<keyword id="KW-0002">3D-structure</keyword>
<keyword id="KW-0329">Glyoxylate bypass</keyword>
<keyword id="KW-0330">Glyoxysome</keyword>
<keyword id="KW-0456">Lyase</keyword>
<keyword id="KW-0460">Magnesium</keyword>
<keyword id="KW-0479">Metal-binding</keyword>
<keyword id="KW-0576">Peroxisome</keyword>
<keyword id="KW-1185">Reference proteome</keyword>
<keyword id="KW-0816">Tricarboxylic acid cycle</keyword>
<sequence length="538" mass="60321">MSYIEEEDQRYWDEVAAVKNWWKDSRWRYTKRPFTAEQIVAKRGNLKIEYPSNVQAKKLWGILERNFKNKEASFTYGCLDPTMVTQMAKYLDTVYVSGWQSSSTASSTDEPSPDLADYPMNTVPNKVNHLWMAQLFHDRKQREERMTTPKDQRHKVANVDYLRPIIADADTGHGGLTAVMKLTKLFVERGAAGIHIEDQAPGTKKCGHMAGKVLVPISEHINRLVAIRAQADIMGTDLLAIARTDSEAATLITSTIDHRDHPFIIGSTNPDIQPLNDLMVMAEQAGKNGAELQAIEDEWLAKAGLKLFNDAVVDAINNSPLPNKKAAIEKYLTQSKGKSNLEARAIAKEIAGTDIYFDWEAPRTREGYYRYQGGTQCAINRAVAYAPFADLIWMESKLPDYKQAKEFADGVHAVWPEQKLAYNLSPSFNWKKAMPRDEQETYIKRLGALGYAWQFITLAGLHTTALISDTFAKAYAKQGMRAYGELVQEPEMANGVDVVTHQKWSGANYVDNMLKMITGGVSSTAAMGKGVTEDQFKS</sequence>
<proteinExistence type="evidence at protein level"/>
<reference key="1">
    <citation type="journal article" date="1992" name="Curr. Genet.">
        <title>Characterization of the glyoxysomal isocitrate lyase genes of Aspergillus nidulans (acuD) and Neurospora crassa (acu-3).</title>
        <authorList>
            <person name="Gainey L.D.S."/>
            <person name="Connerton I.F."/>
            <person name="Lewis E.H."/>
            <person name="Turner G."/>
            <person name="Ballance D.J."/>
        </authorList>
    </citation>
    <scope>NUCLEOTIDE SEQUENCE [GENOMIC DNA]</scope>
    <source>
        <strain>R153</strain>
    </source>
</reference>
<reference key="2">
    <citation type="journal article" date="2005" name="Nature">
        <title>Sequencing of Aspergillus nidulans and comparative analysis with A. fumigatus and A. oryzae.</title>
        <authorList>
            <person name="Galagan J.E."/>
            <person name="Calvo S.E."/>
            <person name="Cuomo C."/>
            <person name="Ma L.-J."/>
            <person name="Wortman J.R."/>
            <person name="Batzoglou S."/>
            <person name="Lee S.-I."/>
            <person name="Bastuerkmen M."/>
            <person name="Spevak C.C."/>
            <person name="Clutterbuck J."/>
            <person name="Kapitonov V."/>
            <person name="Jurka J."/>
            <person name="Scazzocchio C."/>
            <person name="Farman M.L."/>
            <person name="Butler J."/>
            <person name="Purcell S."/>
            <person name="Harris S."/>
            <person name="Braus G.H."/>
            <person name="Draht O."/>
            <person name="Busch S."/>
            <person name="D'Enfert C."/>
            <person name="Bouchier C."/>
            <person name="Goldman G.H."/>
            <person name="Bell-Pedersen D."/>
            <person name="Griffiths-Jones S."/>
            <person name="Doonan J.H."/>
            <person name="Yu J."/>
            <person name="Vienken K."/>
            <person name="Pain A."/>
            <person name="Freitag M."/>
            <person name="Selker E.U."/>
            <person name="Archer D.B."/>
            <person name="Penalva M.A."/>
            <person name="Oakley B.R."/>
            <person name="Momany M."/>
            <person name="Tanaka T."/>
            <person name="Kumagai T."/>
            <person name="Asai K."/>
            <person name="Machida M."/>
            <person name="Nierman W.C."/>
            <person name="Denning D.W."/>
            <person name="Caddick M.X."/>
            <person name="Hynes M."/>
            <person name="Paoletti M."/>
            <person name="Fischer R."/>
            <person name="Miller B.L."/>
            <person name="Dyer P.S."/>
            <person name="Sachs M.S."/>
            <person name="Osmani S.A."/>
            <person name="Birren B.W."/>
        </authorList>
    </citation>
    <scope>NUCLEOTIDE SEQUENCE [LARGE SCALE GENOMIC DNA]</scope>
    <source>
        <strain>FGSC A4 / ATCC 38163 / CBS 112.46 / NRRL 194 / M139</strain>
    </source>
</reference>
<reference key="3">
    <citation type="journal article" date="2009" name="Fungal Genet. Biol.">
        <title>The 2008 update of the Aspergillus nidulans genome annotation: a community effort.</title>
        <authorList>
            <person name="Wortman J.R."/>
            <person name="Gilsenan J.M."/>
            <person name="Joardar V."/>
            <person name="Deegan J."/>
            <person name="Clutterbuck J."/>
            <person name="Andersen M.R."/>
            <person name="Archer D."/>
            <person name="Bencina M."/>
            <person name="Braus G."/>
            <person name="Coutinho P."/>
            <person name="von Dohren H."/>
            <person name="Doonan J."/>
            <person name="Driessen A.J."/>
            <person name="Durek P."/>
            <person name="Espeso E."/>
            <person name="Fekete E."/>
            <person name="Flipphi M."/>
            <person name="Estrada C.G."/>
            <person name="Geysens S."/>
            <person name="Goldman G."/>
            <person name="de Groot P.W."/>
            <person name="Hansen K."/>
            <person name="Harris S.D."/>
            <person name="Heinekamp T."/>
            <person name="Helmstaedt K."/>
            <person name="Henrissat B."/>
            <person name="Hofmann G."/>
            <person name="Homan T."/>
            <person name="Horio T."/>
            <person name="Horiuchi H."/>
            <person name="James S."/>
            <person name="Jones M."/>
            <person name="Karaffa L."/>
            <person name="Karanyi Z."/>
            <person name="Kato M."/>
            <person name="Keller N."/>
            <person name="Kelly D.E."/>
            <person name="Kiel J.A."/>
            <person name="Kim J.M."/>
            <person name="van der Klei I.J."/>
            <person name="Klis F.M."/>
            <person name="Kovalchuk A."/>
            <person name="Krasevec N."/>
            <person name="Kubicek C.P."/>
            <person name="Liu B."/>
            <person name="Maccabe A."/>
            <person name="Meyer V."/>
            <person name="Mirabito P."/>
            <person name="Miskei M."/>
            <person name="Mos M."/>
            <person name="Mullins J."/>
            <person name="Nelson D.R."/>
            <person name="Nielsen J."/>
            <person name="Oakley B.R."/>
            <person name="Osmani S.A."/>
            <person name="Pakula T."/>
            <person name="Paszewski A."/>
            <person name="Paulsen I."/>
            <person name="Pilsyk S."/>
            <person name="Pocsi I."/>
            <person name="Punt P.J."/>
            <person name="Ram A.F."/>
            <person name="Ren Q."/>
            <person name="Robellet X."/>
            <person name="Robson G."/>
            <person name="Seiboth B."/>
            <person name="van Solingen P."/>
            <person name="Specht T."/>
            <person name="Sun J."/>
            <person name="Taheri-Talesh N."/>
            <person name="Takeshita N."/>
            <person name="Ussery D."/>
            <person name="vanKuyk P.A."/>
            <person name="Visser H."/>
            <person name="van de Vondervoort P.J."/>
            <person name="de Vries R.P."/>
            <person name="Walton J."/>
            <person name="Xiang X."/>
            <person name="Xiong Y."/>
            <person name="Zeng A.P."/>
            <person name="Brandt B.W."/>
            <person name="Cornell M.J."/>
            <person name="van den Hondel C.A."/>
            <person name="Visser J."/>
            <person name="Oliver S.G."/>
            <person name="Turner G."/>
        </authorList>
    </citation>
    <scope>GENOME REANNOTATION</scope>
    <source>
        <strain>FGSC A4 / ATCC 38163 / CBS 112.46 / NRRL 194 / M139</strain>
    </source>
</reference>
<reference key="4">
    <citation type="journal article" date="2000" name="Structure">
        <title>The crystal structure and active site location of isocitrate lyase from the fungus Aspergillus nidulans.</title>
        <authorList>
            <person name="Britton K.L."/>
            <person name="Langridge S.J."/>
            <person name="Baker P.J."/>
            <person name="Weeradechapon K."/>
            <person name="Sedelnikova S.E."/>
            <person name="De Lucas J.R."/>
            <person name="Rice D.W."/>
            <person name="Turner G."/>
        </authorList>
    </citation>
    <scope>X-RAY CRYSTALLOGRAPHY (2.8 ANGSTROMS)</scope>
    <scope>SUBUNIT</scope>
</reference>
<feature type="chain" id="PRO_0000068790" description="Isocitrate lyase">
    <location>
        <begin position="1"/>
        <end position="538"/>
    </location>
</feature>
<feature type="active site" description="Proton acceptor" evidence="7">
    <location>
        <position position="206"/>
    </location>
</feature>
<feature type="binding site" evidence="3">
    <location>
        <begin position="97"/>
        <end position="99"/>
    </location>
    <ligand>
        <name>substrate</name>
    </ligand>
</feature>
<feature type="binding site" evidence="3">
    <location>
        <position position="168"/>
    </location>
    <ligand>
        <name>Mg(2+)</name>
        <dbReference type="ChEBI" id="CHEBI:18420"/>
    </ligand>
</feature>
<feature type="binding site" evidence="3">
    <location>
        <begin position="207"/>
        <end position="208"/>
    </location>
    <ligand>
        <name>substrate</name>
    </ligand>
</feature>
<feature type="binding site" evidence="3">
    <location>
        <position position="243"/>
    </location>
    <ligand>
        <name>substrate</name>
    </ligand>
</feature>
<feature type="binding site" evidence="3">
    <location>
        <begin position="423"/>
        <end position="427"/>
    </location>
    <ligand>
        <name>substrate</name>
    </ligand>
</feature>
<feature type="binding site" evidence="3">
    <location>
        <position position="457"/>
    </location>
    <ligand>
        <name>substrate</name>
    </ligand>
</feature>
<feature type="sequence conflict" description="In Ref. 1; CAA44572." evidence="6" ref="1">
    <location>
        <position position="17"/>
    </location>
</feature>
<feature type="sequence conflict" description="In Ref. 1; CAA44572." evidence="6" ref="1">
    <location>
        <position position="68"/>
    </location>
</feature>
<feature type="sequence conflict" description="In Ref. 1; CAA44572." evidence="6" ref="1">
    <original>A</original>
    <variation>T</variation>
    <location>
        <position position="157"/>
    </location>
</feature>
<feature type="helix" evidence="8">
    <location>
        <begin position="3"/>
        <end position="16"/>
    </location>
</feature>
<feature type="helix" evidence="8">
    <location>
        <begin position="18"/>
        <end position="22"/>
    </location>
</feature>
<feature type="helix" evidence="8">
    <location>
        <begin position="25"/>
        <end position="29"/>
    </location>
</feature>
<feature type="helix" evidence="8">
    <location>
        <begin position="36"/>
        <end position="42"/>
    </location>
</feature>
<feature type="helix" evidence="8">
    <location>
        <begin position="52"/>
        <end position="69"/>
    </location>
</feature>
<feature type="strand" evidence="8">
    <location>
        <begin position="73"/>
        <end position="77"/>
    </location>
</feature>
<feature type="helix" evidence="8">
    <location>
        <begin position="81"/>
        <end position="90"/>
    </location>
</feature>
<feature type="strand" evidence="8">
    <location>
        <begin position="94"/>
        <end position="96"/>
    </location>
</feature>
<feature type="helix" evidence="8">
    <location>
        <begin position="98"/>
        <end position="104"/>
    </location>
</feature>
<feature type="helix" evidence="8">
    <location>
        <begin position="122"/>
        <end position="146"/>
    </location>
</feature>
<feature type="helix" evidence="8">
    <location>
        <begin position="150"/>
        <end position="153"/>
    </location>
</feature>
<feature type="strand" evidence="8">
    <location>
        <begin position="165"/>
        <end position="168"/>
    </location>
</feature>
<feature type="strand" evidence="8">
    <location>
        <begin position="173"/>
        <end position="175"/>
    </location>
</feature>
<feature type="helix" evidence="8">
    <location>
        <begin position="176"/>
        <end position="188"/>
    </location>
</feature>
<feature type="strand" evidence="8">
    <location>
        <begin position="192"/>
        <end position="196"/>
    </location>
</feature>
<feature type="strand" evidence="8">
    <location>
        <begin position="212"/>
        <end position="214"/>
    </location>
</feature>
<feature type="helix" evidence="8">
    <location>
        <begin position="217"/>
        <end position="233"/>
    </location>
</feature>
<feature type="strand" evidence="8">
    <location>
        <begin position="239"/>
        <end position="243"/>
    </location>
</feature>
<feature type="helix" evidence="8">
    <location>
        <begin position="246"/>
        <end position="248"/>
    </location>
</feature>
<feature type="strand" evidence="8">
    <location>
        <begin position="249"/>
        <end position="253"/>
    </location>
</feature>
<feature type="helix" evidence="8">
    <location>
        <begin position="258"/>
        <end position="263"/>
    </location>
</feature>
<feature type="strand" evidence="8">
    <location>
        <begin position="264"/>
        <end position="267"/>
    </location>
</feature>
<feature type="helix" evidence="8">
    <location>
        <begin position="275"/>
        <end position="284"/>
    </location>
</feature>
<feature type="helix" evidence="8">
    <location>
        <begin position="290"/>
        <end position="302"/>
    </location>
</feature>
<feature type="helix" evidence="8">
    <location>
        <begin position="309"/>
        <end position="317"/>
    </location>
</feature>
<feature type="helix" evidence="8">
    <location>
        <begin position="324"/>
        <end position="335"/>
    </location>
</feature>
<feature type="helix" evidence="8">
    <location>
        <begin position="340"/>
        <end position="351"/>
    </location>
</feature>
<feature type="strand" evidence="8">
    <location>
        <begin position="369"/>
        <end position="371"/>
    </location>
</feature>
<feature type="helix" evidence="8">
    <location>
        <begin position="375"/>
        <end position="385"/>
    </location>
</feature>
<feature type="strand" evidence="8">
    <location>
        <begin position="390"/>
        <end position="393"/>
    </location>
</feature>
<feature type="helix" evidence="8">
    <location>
        <begin position="401"/>
        <end position="412"/>
    </location>
</feature>
<feature type="strand" evidence="8">
    <location>
        <begin position="419"/>
        <end position="423"/>
    </location>
</feature>
<feature type="strand" evidence="8">
    <location>
        <begin position="426"/>
        <end position="428"/>
    </location>
</feature>
<feature type="helix" evidence="8">
    <location>
        <begin position="430"/>
        <end position="432"/>
    </location>
</feature>
<feature type="helix" evidence="8">
    <location>
        <begin position="436"/>
        <end position="440"/>
    </location>
</feature>
<feature type="helix" evidence="8">
    <location>
        <begin position="442"/>
        <end position="448"/>
    </location>
</feature>
<feature type="strand" evidence="8">
    <location>
        <begin position="451"/>
        <end position="456"/>
    </location>
</feature>
<feature type="helix" evidence="8">
    <location>
        <begin position="459"/>
        <end position="478"/>
    </location>
</feature>
<feature type="helix" evidence="8">
    <location>
        <begin position="480"/>
        <end position="486"/>
    </location>
</feature>
<feature type="helix" evidence="8">
    <location>
        <begin position="488"/>
        <end position="494"/>
    </location>
</feature>
<feature type="helix" evidence="8">
    <location>
        <begin position="497"/>
        <end position="499"/>
    </location>
</feature>
<feature type="helix" evidence="8">
    <location>
        <begin position="501"/>
        <end position="505"/>
    </location>
</feature>
<feature type="helix" evidence="8">
    <location>
        <begin position="507"/>
        <end position="518"/>
    </location>
</feature>
<gene>
    <name evidence="5" type="primary">acuD</name>
    <name type="ORF">AN5634</name>
</gene>
<name>ACEA_EMENI</name>
<protein>
    <recommendedName>
        <fullName evidence="5">Isocitrate lyase</fullName>
        <shortName evidence="6">ICL</shortName>
        <shortName evidence="6">Isocitrase</shortName>
        <shortName evidence="6">Isocitratase</shortName>
        <ecNumber evidence="1">4.1.3.1</ecNumber>
    </recommendedName>
    <alternativeName>
        <fullName evidence="1">Methylisocitrate lyase</fullName>
        <shortName evidence="6">MICA</shortName>
        <ecNumber evidence="1">4.1.3.30</ecNumber>
    </alternativeName>
    <alternativeName>
        <fullName evidence="6">Threo-D(S)-isocitrate glyoxylate-lyase</fullName>
    </alternativeName>
</protein>
<organism>
    <name type="scientific">Emericella nidulans (strain FGSC A4 / ATCC 38163 / CBS 112.46 / NRRL 194 / M139)</name>
    <name type="common">Aspergillus nidulans</name>
    <dbReference type="NCBI Taxonomy" id="227321"/>
    <lineage>
        <taxon>Eukaryota</taxon>
        <taxon>Fungi</taxon>
        <taxon>Dikarya</taxon>
        <taxon>Ascomycota</taxon>
        <taxon>Pezizomycotina</taxon>
        <taxon>Eurotiomycetes</taxon>
        <taxon>Eurotiomycetidae</taxon>
        <taxon>Eurotiales</taxon>
        <taxon>Aspergillaceae</taxon>
        <taxon>Aspergillus</taxon>
        <taxon>Aspergillus subgen. Nidulantes</taxon>
    </lineage>
</organism>